<sequence length="63" mass="6966">MVGGRVAHPVLKGPSEVKELIIGSVLGLAAGGLWKMHHWNEQRKTRAFYDLLEKGEISVVVQE</sequence>
<keyword id="KW-0472">Membrane</keyword>
<keyword id="KW-0496">Mitochondrion</keyword>
<keyword id="KW-0999">Mitochondrion inner membrane</keyword>
<keyword id="KW-0812">Transmembrane</keyword>
<keyword id="KW-1133">Transmembrane helix</keyword>
<comment type="function">
    <text evidence="1">This protein is one of the nuclear-coded polypeptide chains of cytochrome c oxidase, the terminal oxidase in mitochondrial electron transport.</text>
</comment>
<comment type="subcellular location">
    <subcellularLocation>
        <location evidence="1">Mitochondrion inner membrane</location>
    </subcellularLocation>
</comment>
<comment type="similarity">
    <text evidence="3">Belongs to the cytochrome c oxidase subunit 5C family.</text>
</comment>
<gene>
    <name type="primary">COX5C1</name>
</gene>
<organism>
    <name type="scientific">Helianthus annuus</name>
    <name type="common">Common sunflower</name>
    <dbReference type="NCBI Taxonomy" id="4232"/>
    <lineage>
        <taxon>Eukaryota</taxon>
        <taxon>Viridiplantae</taxon>
        <taxon>Streptophyta</taxon>
        <taxon>Embryophyta</taxon>
        <taxon>Tracheophyta</taxon>
        <taxon>Spermatophyta</taxon>
        <taxon>Magnoliopsida</taxon>
        <taxon>eudicotyledons</taxon>
        <taxon>Gunneridae</taxon>
        <taxon>Pentapetalae</taxon>
        <taxon>asterids</taxon>
        <taxon>campanulids</taxon>
        <taxon>Asterales</taxon>
        <taxon>Asteraceae</taxon>
        <taxon>Asteroideae</taxon>
        <taxon>Heliantheae alliance</taxon>
        <taxon>Heliantheae</taxon>
        <taxon>Helianthus</taxon>
    </lineage>
</organism>
<reference key="1">
    <citation type="submission" date="2002-01" db="EMBL/GenBank/DDBJ databases">
        <title>Genes encoding cytochrome c oxidase subunit 5c from sunflower (Helianthus annuus L.): cDNA isolation and expression studies.</title>
        <authorList>
            <person name="Curi G.C."/>
            <person name="Chan R.L."/>
            <person name="Gonzalez D.H."/>
        </authorList>
    </citation>
    <scope>NUCLEOTIDE SEQUENCE [MRNA]</scope>
</reference>
<feature type="chain" id="PRO_0000128189" description="Cytochrome c oxidase subunit 5C-1">
    <location>
        <begin position="1"/>
        <end position="63"/>
    </location>
</feature>
<feature type="transmembrane region" description="Helical" evidence="2">
    <location>
        <begin position="15"/>
        <end position="34"/>
    </location>
</feature>
<dbReference type="EMBL" id="AY072780">
    <property type="protein sequence ID" value="AAL67938.1"/>
    <property type="molecule type" value="mRNA"/>
</dbReference>
<dbReference type="SMR" id="Q8VY40"/>
<dbReference type="GO" id="GO:0005743">
    <property type="term" value="C:mitochondrial inner membrane"/>
    <property type="evidence" value="ECO:0007669"/>
    <property type="project" value="UniProtKB-SubCell"/>
</dbReference>
<dbReference type="InterPro" id="IPR008432">
    <property type="entry name" value="COX5C"/>
</dbReference>
<dbReference type="PANTHER" id="PTHR34372">
    <property type="entry name" value="CYTOCHROME C OXIDASE SUBUNIT 5C-2-RELATED"/>
    <property type="match status" value="1"/>
</dbReference>
<dbReference type="PANTHER" id="PTHR34372:SF2">
    <property type="entry name" value="CYTOCHROME C OXIDASE SUBUNIT 5C-2-RELATED"/>
    <property type="match status" value="1"/>
</dbReference>
<dbReference type="PIRSF" id="PIRSF038131">
    <property type="entry name" value="COX5C"/>
    <property type="match status" value="1"/>
</dbReference>
<evidence type="ECO:0000250" key="1"/>
<evidence type="ECO:0000255" key="2"/>
<evidence type="ECO:0000305" key="3"/>
<proteinExistence type="inferred from homology"/>
<protein>
    <recommendedName>
        <fullName>Cytochrome c oxidase subunit 5C-1</fullName>
    </recommendedName>
    <alternativeName>
        <fullName>Cytochrome c oxidase polypeptide Vc-1</fullName>
    </alternativeName>
</protein>
<name>CX5C1_HELAN</name>
<accession>Q8VY40</accession>